<gene>
    <name type="ORF">SPCC1840.05c</name>
</gene>
<sequence length="587" mass="65494">MDPILQELVDEWFKLDQDETTRNEVSQLIKAEDYATLKQIMHPRIGFGTSGLRAEIGAGFARMNCLTVIQASQGFAEYLLQTVPSAAKLGVVIGHDHRHKSNTFARLTAAVFLQKGFKTYFFDHLVHTPLVPFAVKTLGTAAGVMITASHNPAAYNGYKVYWGNGCAIIPPHDKGIAACIEKNLTPITWDKNLVENHKLADRDFAVGLLKNYWSQLHEFHSENNFSLEMKSLKFVYTPIHGVGLPFVTSALHLFGEQGDMISVPLQDSPNPDFPTVKFPNPEEEGALDLAYEQADANGISYVLATDPDADRFAFAEKINGAWRRFTGDEVGCILAYFIFQEYKNVGKPIDDFYVLSTTVSSAMVKSMAKVEGFHHVETLTGFKWLGNKALELEKQGKFIGLAYEEALGYMVGSIVRDKDGVNALITFLHLLKRLQLQNLSITEVFEQMSKKYGYYTTQNSYFLSRDTPKLRALVDALRHYDTKSGYPATLGSKKITNVRDLTTGYDSSSTDGKATLPVSKSSDNVTFELENGEVIMTIRTSGTEPKLKFYICARGHSLEDSIKNATEVKQAIKSEWFHPQQNGLEEP</sequence>
<dbReference type="EC" id="5.4.2.7" evidence="2"/>
<dbReference type="EMBL" id="CU329672">
    <property type="protein sequence ID" value="CAA20128.1"/>
    <property type="molecule type" value="Genomic_DNA"/>
</dbReference>
<dbReference type="PIR" id="T41173">
    <property type="entry name" value="T41173"/>
</dbReference>
<dbReference type="SMR" id="O74478"/>
<dbReference type="BioGRID" id="275497">
    <property type="interactions" value="16"/>
</dbReference>
<dbReference type="FunCoup" id="O74478">
    <property type="interactions" value="232"/>
</dbReference>
<dbReference type="STRING" id="284812.O74478"/>
<dbReference type="iPTMnet" id="O74478"/>
<dbReference type="PaxDb" id="4896-SPCC1840.05c.1"/>
<dbReference type="EnsemblFungi" id="SPCC1840.05c.1">
    <property type="protein sequence ID" value="SPCC1840.05c.1:pep"/>
    <property type="gene ID" value="SPCC1840.05c"/>
</dbReference>
<dbReference type="KEGG" id="spo:2538920"/>
<dbReference type="PomBase" id="SPCC1840.05c"/>
<dbReference type="VEuPathDB" id="FungiDB:SPCC1840.05c"/>
<dbReference type="eggNOG" id="KOG1220">
    <property type="taxonomic scope" value="Eukaryota"/>
</dbReference>
<dbReference type="HOGENOM" id="CLU_016950_0_1_1"/>
<dbReference type="InParanoid" id="O74478"/>
<dbReference type="OMA" id="GYCVDPE"/>
<dbReference type="PhylomeDB" id="O74478"/>
<dbReference type="Reactome" id="R-SPO-6798695">
    <property type="pathway name" value="Neutrophil degranulation"/>
</dbReference>
<dbReference type="Reactome" id="R-SPO-70171">
    <property type="pathway name" value="Glycolysis"/>
</dbReference>
<dbReference type="Reactome" id="R-SPO-71336">
    <property type="pathway name" value="Pentose phosphate pathway"/>
</dbReference>
<dbReference type="PRO" id="PR:O74478"/>
<dbReference type="Proteomes" id="UP000002485">
    <property type="component" value="Chromosome III"/>
</dbReference>
<dbReference type="GO" id="GO:0005829">
    <property type="term" value="C:cytosol"/>
    <property type="evidence" value="ECO:0007005"/>
    <property type="project" value="PomBase"/>
</dbReference>
<dbReference type="GO" id="GO:0005634">
    <property type="term" value="C:nucleus"/>
    <property type="evidence" value="ECO:0007005"/>
    <property type="project" value="PomBase"/>
</dbReference>
<dbReference type="GO" id="GO:0000287">
    <property type="term" value="F:magnesium ion binding"/>
    <property type="evidence" value="ECO:0007669"/>
    <property type="project" value="InterPro"/>
</dbReference>
<dbReference type="GO" id="GO:0004614">
    <property type="term" value="F:phosphoglucomutase activity"/>
    <property type="evidence" value="ECO:0000266"/>
    <property type="project" value="PomBase"/>
</dbReference>
<dbReference type="GO" id="GO:0008973">
    <property type="term" value="F:phosphopentomutase activity"/>
    <property type="evidence" value="ECO:0000318"/>
    <property type="project" value="GO_Central"/>
</dbReference>
<dbReference type="GO" id="GO:0006006">
    <property type="term" value="P:glucose metabolic process"/>
    <property type="evidence" value="ECO:0000305"/>
    <property type="project" value="PomBase"/>
</dbReference>
<dbReference type="GO" id="GO:0006166">
    <property type="term" value="P:purine ribonucleoside salvage"/>
    <property type="evidence" value="ECO:0000318"/>
    <property type="project" value="GO_Central"/>
</dbReference>
<dbReference type="CDD" id="cd05799">
    <property type="entry name" value="PGM2"/>
    <property type="match status" value="1"/>
</dbReference>
<dbReference type="FunFam" id="3.40.120.10:FF:000035">
    <property type="entry name" value="Pgm3p"/>
    <property type="match status" value="1"/>
</dbReference>
<dbReference type="FunFam" id="3.40.120.10:FF:000037">
    <property type="entry name" value="Pgm3p"/>
    <property type="match status" value="1"/>
</dbReference>
<dbReference type="Gene3D" id="3.40.120.10">
    <property type="entry name" value="Alpha-D-Glucose-1,6-Bisphosphate, subunit A, domain 3"/>
    <property type="match status" value="3"/>
</dbReference>
<dbReference type="InterPro" id="IPR005844">
    <property type="entry name" value="A-D-PHexomutase_a/b/a-I"/>
</dbReference>
<dbReference type="InterPro" id="IPR016055">
    <property type="entry name" value="A-D-PHexomutase_a/b/a-I/II/III"/>
</dbReference>
<dbReference type="InterPro" id="IPR005845">
    <property type="entry name" value="A-D-PHexomutase_a/b/a-II"/>
</dbReference>
<dbReference type="InterPro" id="IPR005846">
    <property type="entry name" value="A-D-PHexomutase_a/b/a-III"/>
</dbReference>
<dbReference type="InterPro" id="IPR036900">
    <property type="entry name" value="A-D-PHexomutase_C_sf"/>
</dbReference>
<dbReference type="InterPro" id="IPR016066">
    <property type="entry name" value="A-D-PHexomutase_CS"/>
</dbReference>
<dbReference type="InterPro" id="IPR005841">
    <property type="entry name" value="Alpha-D-phosphohexomutase_SF"/>
</dbReference>
<dbReference type="PANTHER" id="PTHR45745:SF1">
    <property type="entry name" value="PHOSPHOGLUCOMUTASE 2B-RELATED"/>
    <property type="match status" value="1"/>
</dbReference>
<dbReference type="PANTHER" id="PTHR45745">
    <property type="entry name" value="PHOSPHOMANNOMUTASE 45A"/>
    <property type="match status" value="1"/>
</dbReference>
<dbReference type="Pfam" id="PF02878">
    <property type="entry name" value="PGM_PMM_I"/>
    <property type="match status" value="1"/>
</dbReference>
<dbReference type="Pfam" id="PF02879">
    <property type="entry name" value="PGM_PMM_II"/>
    <property type="match status" value="1"/>
</dbReference>
<dbReference type="Pfam" id="PF02880">
    <property type="entry name" value="PGM_PMM_III"/>
    <property type="match status" value="1"/>
</dbReference>
<dbReference type="PRINTS" id="PR00509">
    <property type="entry name" value="PGMPMM"/>
</dbReference>
<dbReference type="SUPFAM" id="SSF55957">
    <property type="entry name" value="Phosphoglucomutase, C-terminal domain"/>
    <property type="match status" value="1"/>
</dbReference>
<dbReference type="SUPFAM" id="SSF53738">
    <property type="entry name" value="Phosphoglucomutase, first 3 domains"/>
    <property type="match status" value="3"/>
</dbReference>
<dbReference type="PROSITE" id="PS00710">
    <property type="entry name" value="PGM_PMM"/>
    <property type="match status" value="1"/>
</dbReference>
<name>PGM3_SCHPO</name>
<proteinExistence type="evidence at protein level"/>
<accession>O74478</accession>
<organism>
    <name type="scientific">Schizosaccharomyces pombe (strain 972 / ATCC 24843)</name>
    <name type="common">Fission yeast</name>
    <dbReference type="NCBI Taxonomy" id="284812"/>
    <lineage>
        <taxon>Eukaryota</taxon>
        <taxon>Fungi</taxon>
        <taxon>Dikarya</taxon>
        <taxon>Ascomycota</taxon>
        <taxon>Taphrinomycotina</taxon>
        <taxon>Schizosaccharomycetes</taxon>
        <taxon>Schizosaccharomycetales</taxon>
        <taxon>Schizosaccharomycetaceae</taxon>
        <taxon>Schizosaccharomyces</taxon>
    </lineage>
</organism>
<protein>
    <recommendedName>
        <fullName evidence="2">Probable phosphoribomutase</fullName>
        <shortName>PRM</shortName>
        <ecNumber evidence="2">5.4.2.7</ecNumber>
    </recommendedName>
    <alternativeName>
        <fullName evidence="2">Phosphoglucomutase 3 homolog</fullName>
        <shortName>PGM 3 homolog</shortName>
    </alternativeName>
</protein>
<comment type="function">
    <text evidence="2">Converts ribose 1-phosphate to ribose 5-phosphate. Involved in ribose salvage via the pentose phosphate pathway.</text>
</comment>
<comment type="catalytic activity">
    <reaction evidence="2">
        <text>alpha-D-ribose 1-phosphate = D-ribose 5-phosphate</text>
        <dbReference type="Rhea" id="RHEA:18793"/>
        <dbReference type="ChEBI" id="CHEBI:57720"/>
        <dbReference type="ChEBI" id="CHEBI:78346"/>
        <dbReference type="EC" id="5.4.2.7"/>
    </reaction>
</comment>
<comment type="cofactor">
    <cofactor evidence="1">
        <name>Mg(2+)</name>
        <dbReference type="ChEBI" id="CHEBI:18420"/>
    </cofactor>
    <text evidence="1">Binds 1 Mg(2+) ion per subunit.</text>
</comment>
<comment type="subcellular location">
    <subcellularLocation>
        <location evidence="3">Cytoplasm</location>
    </subcellularLocation>
    <subcellularLocation>
        <location evidence="3">Nucleus</location>
    </subcellularLocation>
</comment>
<comment type="similarity">
    <text evidence="5">Belongs to the phosphohexose mutase family.</text>
</comment>
<keyword id="KW-0119">Carbohydrate metabolism</keyword>
<keyword id="KW-0963">Cytoplasm</keyword>
<keyword id="KW-0313">Glucose metabolism</keyword>
<keyword id="KW-0413">Isomerase</keyword>
<keyword id="KW-0460">Magnesium</keyword>
<keyword id="KW-0479">Metal-binding</keyword>
<keyword id="KW-0539">Nucleus</keyword>
<keyword id="KW-0597">Phosphoprotein</keyword>
<keyword id="KW-1185">Reference proteome</keyword>
<reference key="1">
    <citation type="journal article" date="2002" name="Nature">
        <title>The genome sequence of Schizosaccharomyces pombe.</title>
        <authorList>
            <person name="Wood V."/>
            <person name="Gwilliam R."/>
            <person name="Rajandream M.A."/>
            <person name="Lyne M.H."/>
            <person name="Lyne R."/>
            <person name="Stewart A."/>
            <person name="Sgouros J.G."/>
            <person name="Peat N."/>
            <person name="Hayles J."/>
            <person name="Baker S.G."/>
            <person name="Basham D."/>
            <person name="Bowman S."/>
            <person name="Brooks K."/>
            <person name="Brown D."/>
            <person name="Brown S."/>
            <person name="Chillingworth T."/>
            <person name="Churcher C.M."/>
            <person name="Collins M."/>
            <person name="Connor R."/>
            <person name="Cronin A."/>
            <person name="Davis P."/>
            <person name="Feltwell T."/>
            <person name="Fraser A."/>
            <person name="Gentles S."/>
            <person name="Goble A."/>
            <person name="Hamlin N."/>
            <person name="Harris D.E."/>
            <person name="Hidalgo J."/>
            <person name="Hodgson G."/>
            <person name="Holroyd S."/>
            <person name="Hornsby T."/>
            <person name="Howarth S."/>
            <person name="Huckle E.J."/>
            <person name="Hunt S."/>
            <person name="Jagels K."/>
            <person name="James K.D."/>
            <person name="Jones L."/>
            <person name="Jones M."/>
            <person name="Leather S."/>
            <person name="McDonald S."/>
            <person name="McLean J."/>
            <person name="Mooney P."/>
            <person name="Moule S."/>
            <person name="Mungall K.L."/>
            <person name="Murphy L.D."/>
            <person name="Niblett D."/>
            <person name="Odell C."/>
            <person name="Oliver K."/>
            <person name="O'Neil S."/>
            <person name="Pearson D."/>
            <person name="Quail M.A."/>
            <person name="Rabbinowitsch E."/>
            <person name="Rutherford K.M."/>
            <person name="Rutter S."/>
            <person name="Saunders D."/>
            <person name="Seeger K."/>
            <person name="Sharp S."/>
            <person name="Skelton J."/>
            <person name="Simmonds M.N."/>
            <person name="Squares R."/>
            <person name="Squares S."/>
            <person name="Stevens K."/>
            <person name="Taylor K."/>
            <person name="Taylor R.G."/>
            <person name="Tivey A."/>
            <person name="Walsh S.V."/>
            <person name="Warren T."/>
            <person name="Whitehead S."/>
            <person name="Woodward J.R."/>
            <person name="Volckaert G."/>
            <person name="Aert R."/>
            <person name="Robben J."/>
            <person name="Grymonprez B."/>
            <person name="Weltjens I."/>
            <person name="Vanstreels E."/>
            <person name="Rieger M."/>
            <person name="Schaefer M."/>
            <person name="Mueller-Auer S."/>
            <person name="Gabel C."/>
            <person name="Fuchs M."/>
            <person name="Duesterhoeft A."/>
            <person name="Fritzc C."/>
            <person name="Holzer E."/>
            <person name="Moestl D."/>
            <person name="Hilbert H."/>
            <person name="Borzym K."/>
            <person name="Langer I."/>
            <person name="Beck A."/>
            <person name="Lehrach H."/>
            <person name="Reinhardt R."/>
            <person name="Pohl T.M."/>
            <person name="Eger P."/>
            <person name="Zimmermann W."/>
            <person name="Wedler H."/>
            <person name="Wambutt R."/>
            <person name="Purnelle B."/>
            <person name="Goffeau A."/>
            <person name="Cadieu E."/>
            <person name="Dreano S."/>
            <person name="Gloux S."/>
            <person name="Lelaure V."/>
            <person name="Mottier S."/>
            <person name="Galibert F."/>
            <person name="Aves S.J."/>
            <person name="Xiang Z."/>
            <person name="Hunt C."/>
            <person name="Moore K."/>
            <person name="Hurst S.M."/>
            <person name="Lucas M."/>
            <person name="Rochet M."/>
            <person name="Gaillardin C."/>
            <person name="Tallada V.A."/>
            <person name="Garzon A."/>
            <person name="Thode G."/>
            <person name="Daga R.R."/>
            <person name="Cruzado L."/>
            <person name="Jimenez J."/>
            <person name="Sanchez M."/>
            <person name="del Rey F."/>
            <person name="Benito J."/>
            <person name="Dominguez A."/>
            <person name="Revuelta J.L."/>
            <person name="Moreno S."/>
            <person name="Armstrong J."/>
            <person name="Forsburg S.L."/>
            <person name="Cerutti L."/>
            <person name="Lowe T."/>
            <person name="McCombie W.R."/>
            <person name="Paulsen I."/>
            <person name="Potashkin J."/>
            <person name="Shpakovski G.V."/>
            <person name="Ussery D."/>
            <person name="Barrell B.G."/>
            <person name="Nurse P."/>
        </authorList>
    </citation>
    <scope>NUCLEOTIDE SEQUENCE [LARGE SCALE GENOMIC DNA]</scope>
    <source>
        <strain>972 / ATCC 24843</strain>
    </source>
</reference>
<reference key="2">
    <citation type="journal article" date="2006" name="Nat. Biotechnol.">
        <title>ORFeome cloning and global analysis of protein localization in the fission yeast Schizosaccharomyces pombe.</title>
        <authorList>
            <person name="Matsuyama A."/>
            <person name="Arai R."/>
            <person name="Yashiroda Y."/>
            <person name="Shirai A."/>
            <person name="Kamata A."/>
            <person name="Sekido S."/>
            <person name="Kobayashi Y."/>
            <person name="Hashimoto A."/>
            <person name="Hamamoto M."/>
            <person name="Hiraoka Y."/>
            <person name="Horinouchi S."/>
            <person name="Yoshida M."/>
        </authorList>
    </citation>
    <scope>SUBCELLULAR LOCATION [LARGE SCALE ANALYSIS]</scope>
</reference>
<reference key="3">
    <citation type="journal article" date="2008" name="J. Proteome Res.">
        <title>Phosphoproteome analysis of fission yeast.</title>
        <authorList>
            <person name="Wilson-Grady J.T."/>
            <person name="Villen J."/>
            <person name="Gygi S.P."/>
        </authorList>
    </citation>
    <scope>PHOSPHORYLATION [LARGE SCALE ANALYSIS] AT SER-149</scope>
    <scope>IDENTIFICATION BY MASS SPECTROMETRY</scope>
</reference>
<evidence type="ECO:0000250" key="1">
    <source>
        <dbReference type="UniProtKB" id="P00949"/>
    </source>
</evidence>
<evidence type="ECO:0000250" key="2">
    <source>
        <dbReference type="UniProtKB" id="Q03262"/>
    </source>
</evidence>
<evidence type="ECO:0000269" key="3">
    <source>
    </source>
</evidence>
<evidence type="ECO:0000269" key="4">
    <source>
    </source>
</evidence>
<evidence type="ECO:0000305" key="5"/>
<feature type="chain" id="PRO_0000315630" description="Probable phosphoribomutase">
    <location>
        <begin position="1"/>
        <end position="587"/>
    </location>
</feature>
<feature type="active site" description="Phosphoserine intermediate" evidence="1">
    <location>
        <position position="149"/>
    </location>
</feature>
<feature type="binding site" evidence="1">
    <location>
        <position position="49"/>
    </location>
    <ligand>
        <name>substrate</name>
    </ligand>
</feature>
<feature type="binding site" evidence="1">
    <location>
        <position position="53"/>
    </location>
    <ligand>
        <name>substrate</name>
    </ligand>
</feature>
<feature type="binding site" evidence="1">
    <location>
        <begin position="149"/>
        <end position="150"/>
    </location>
    <ligand>
        <name>substrate</name>
    </ligand>
</feature>
<feature type="binding site" description="via phosphate group" evidence="1">
    <location>
        <position position="149"/>
    </location>
    <ligand>
        <name>Mg(2+)</name>
        <dbReference type="ChEBI" id="CHEBI:18420"/>
    </ligand>
</feature>
<feature type="binding site" evidence="1">
    <location>
        <position position="306"/>
    </location>
    <ligand>
        <name>Mg(2+)</name>
        <dbReference type="ChEBI" id="CHEBI:18420"/>
    </ligand>
</feature>
<feature type="binding site" evidence="1">
    <location>
        <position position="308"/>
    </location>
    <ligand>
        <name>Mg(2+)</name>
        <dbReference type="ChEBI" id="CHEBI:18420"/>
    </ligand>
</feature>
<feature type="binding site" evidence="1">
    <location>
        <begin position="310"/>
        <end position="311"/>
    </location>
    <ligand>
        <name>substrate</name>
    </ligand>
</feature>
<feature type="binding site" evidence="1">
    <location>
        <position position="310"/>
    </location>
    <ligand>
        <name>Mg(2+)</name>
        <dbReference type="ChEBI" id="CHEBI:18420"/>
    </ligand>
</feature>
<feature type="binding site" evidence="1">
    <location>
        <position position="380"/>
    </location>
    <ligand>
        <name>substrate</name>
    </ligand>
</feature>
<feature type="binding site" evidence="1">
    <location>
        <begin position="404"/>
        <end position="406"/>
    </location>
    <ligand>
        <name>substrate</name>
    </ligand>
</feature>
<feature type="binding site" evidence="1">
    <location>
        <position position="418"/>
    </location>
    <ligand>
        <name>substrate</name>
    </ligand>
</feature>
<feature type="modified residue" description="Phosphoserine" evidence="4">
    <location>
        <position position="149"/>
    </location>
</feature>